<sequence>MAQKKKSSGSGLMSSAGLMTYYDADKKAIHVQPKTVFIFGAICGIVILAFSAGFGLWP</sequence>
<comment type="function">
    <text evidence="1">Involved in protein export. The function of the beta subunit is unknown, but it may be involved in stabilization of the trimeric complex.</text>
</comment>
<comment type="subunit">
    <text evidence="1">Component of the protein translocase complex. Heterotrimer consisting of alpha (SecY), beta (SecG) and gamma (SecE) subunits. Can form oligomers of the heterotrimer.</text>
</comment>
<comment type="subcellular location">
    <subcellularLocation>
        <location evidence="1">Cell membrane</location>
        <topology evidence="1">Single-pass membrane protein</topology>
    </subcellularLocation>
</comment>
<comment type="similarity">
    <text evidence="1">Belongs to the SEC61-beta family.</text>
</comment>
<reference key="1">
    <citation type="journal article" date="2009" name="ISME J.">
        <title>The genome sequence of the psychrophilic archaeon, Methanococcoides burtonii: the role of genome evolution in cold adaptation.</title>
        <authorList>
            <person name="Allen M.A."/>
            <person name="Lauro F.M."/>
            <person name="Williams T.J."/>
            <person name="Burg D."/>
            <person name="Siddiqui K.S."/>
            <person name="De Francisci D."/>
            <person name="Chong K.W."/>
            <person name="Pilak O."/>
            <person name="Chew H.H."/>
            <person name="De Maere M.Z."/>
            <person name="Ting L."/>
            <person name="Katrib M."/>
            <person name="Ng C."/>
            <person name="Sowers K.R."/>
            <person name="Galperin M.Y."/>
            <person name="Anderson I.J."/>
            <person name="Ivanova N."/>
            <person name="Dalin E."/>
            <person name="Martinez M."/>
            <person name="Lapidus A."/>
            <person name="Hauser L."/>
            <person name="Land M."/>
            <person name="Thomas T."/>
            <person name="Cavicchioli R."/>
        </authorList>
    </citation>
    <scope>NUCLEOTIDE SEQUENCE [LARGE SCALE GENOMIC DNA]</scope>
    <source>
        <strain>DSM 6242 / NBRC 107633 / OCM 468 / ACE-M</strain>
    </source>
</reference>
<name>SECG_METBU</name>
<dbReference type="EMBL" id="CP000300">
    <property type="protein sequence ID" value="ABE52990.1"/>
    <property type="molecule type" value="Genomic_DNA"/>
</dbReference>
<dbReference type="RefSeq" id="WP_011500129.1">
    <property type="nucleotide sequence ID" value="NC_007955.1"/>
</dbReference>
<dbReference type="SMR" id="Q12U86"/>
<dbReference type="STRING" id="259564.Mbur_2117"/>
<dbReference type="GeneID" id="3998200"/>
<dbReference type="KEGG" id="mbu:Mbur_2117"/>
<dbReference type="HOGENOM" id="CLU_208205_1_1_2"/>
<dbReference type="OrthoDB" id="43651at2157"/>
<dbReference type="Proteomes" id="UP000001979">
    <property type="component" value="Chromosome"/>
</dbReference>
<dbReference type="GO" id="GO:0005886">
    <property type="term" value="C:plasma membrane"/>
    <property type="evidence" value="ECO:0007669"/>
    <property type="project" value="UniProtKB-SubCell"/>
</dbReference>
<dbReference type="GO" id="GO:0015031">
    <property type="term" value="P:protein transport"/>
    <property type="evidence" value="ECO:0007669"/>
    <property type="project" value="UniProtKB-UniRule"/>
</dbReference>
<dbReference type="HAMAP" id="MF_00751">
    <property type="entry name" value="SecG"/>
    <property type="match status" value="1"/>
</dbReference>
<dbReference type="InterPro" id="IPR023531">
    <property type="entry name" value="Preprot_translocase_SecG"/>
</dbReference>
<dbReference type="InterPro" id="IPR016482">
    <property type="entry name" value="SecG/Sec61-beta/Sbh"/>
</dbReference>
<dbReference type="NCBIfam" id="NF002318">
    <property type="entry name" value="PRK01253.1"/>
    <property type="match status" value="1"/>
</dbReference>
<dbReference type="Pfam" id="PF03911">
    <property type="entry name" value="Sec61_beta"/>
    <property type="match status" value="1"/>
</dbReference>
<organism>
    <name type="scientific">Methanococcoides burtonii (strain DSM 6242 / NBRC 107633 / OCM 468 / ACE-M)</name>
    <dbReference type="NCBI Taxonomy" id="259564"/>
    <lineage>
        <taxon>Archaea</taxon>
        <taxon>Methanobacteriati</taxon>
        <taxon>Methanobacteriota</taxon>
        <taxon>Stenosarchaea group</taxon>
        <taxon>Methanomicrobia</taxon>
        <taxon>Methanosarcinales</taxon>
        <taxon>Methanosarcinaceae</taxon>
        <taxon>Methanococcoides</taxon>
    </lineage>
</organism>
<gene>
    <name evidence="1" type="primary">secG</name>
    <name type="ordered locus">Mbur_2117</name>
</gene>
<accession>Q12U86</accession>
<feature type="chain" id="PRO_1000133344" description="Preprotein translocase subunit SecG">
    <location>
        <begin position="1"/>
        <end position="58"/>
    </location>
</feature>
<feature type="topological domain" description="Cytoplasmic" evidence="1">
    <location>
        <begin position="1"/>
        <end position="32"/>
    </location>
</feature>
<feature type="transmembrane region" description="Helical" evidence="1">
    <location>
        <begin position="33"/>
        <end position="54"/>
    </location>
</feature>
<feature type="topological domain" description="Extracellular" evidence="1">
    <location>
        <begin position="55"/>
        <end position="58"/>
    </location>
</feature>
<protein>
    <recommendedName>
        <fullName evidence="1">Preprotein translocase subunit SecG</fullName>
    </recommendedName>
    <alternativeName>
        <fullName evidence="1">Protein transport protein Sec61 subunit beta homolog</fullName>
    </alternativeName>
</protein>
<proteinExistence type="inferred from homology"/>
<evidence type="ECO:0000255" key="1">
    <source>
        <dbReference type="HAMAP-Rule" id="MF_00751"/>
    </source>
</evidence>
<keyword id="KW-1003">Cell membrane</keyword>
<keyword id="KW-0472">Membrane</keyword>
<keyword id="KW-0653">Protein transport</keyword>
<keyword id="KW-0811">Translocation</keyword>
<keyword id="KW-0812">Transmembrane</keyword>
<keyword id="KW-1133">Transmembrane helix</keyword>
<keyword id="KW-0813">Transport</keyword>